<protein>
    <recommendedName>
        <fullName evidence="1">Cysteine--tRNA ligase</fullName>
        <ecNumber evidence="1">6.1.1.16</ecNumber>
    </recommendedName>
    <alternativeName>
        <fullName evidence="1">Cysteinyl-tRNA synthetase</fullName>
        <shortName evidence="1">CysRS</shortName>
    </alternativeName>
</protein>
<organism>
    <name type="scientific">Treponema pallidum subsp. pallidum (strain SS14)</name>
    <dbReference type="NCBI Taxonomy" id="455434"/>
    <lineage>
        <taxon>Bacteria</taxon>
        <taxon>Pseudomonadati</taxon>
        <taxon>Spirochaetota</taxon>
        <taxon>Spirochaetia</taxon>
        <taxon>Spirochaetales</taxon>
        <taxon>Treponemataceae</taxon>
        <taxon>Treponema</taxon>
    </lineage>
</organism>
<evidence type="ECO:0000255" key="1">
    <source>
        <dbReference type="HAMAP-Rule" id="MF_00041"/>
    </source>
</evidence>
<reference key="1">
    <citation type="journal article" date="2008" name="BMC Microbiol.">
        <title>Complete genome sequence of Treponema pallidum ssp. pallidum strain SS14 determined with oligonucleotide arrays.</title>
        <authorList>
            <person name="Matejkova P."/>
            <person name="Strouhal M."/>
            <person name="Smajs D."/>
            <person name="Norris S.J."/>
            <person name="Palzkill T."/>
            <person name="Petrosino J.F."/>
            <person name="Sodergren E."/>
            <person name="Norton J.E."/>
            <person name="Singh J."/>
            <person name="Richmond T.A."/>
            <person name="Molla M.N."/>
            <person name="Albert T.J."/>
            <person name="Weinstock G.M."/>
        </authorList>
    </citation>
    <scope>NUCLEOTIDE SEQUENCE [LARGE SCALE GENOMIC DNA]</scope>
    <source>
        <strain>SS14</strain>
    </source>
</reference>
<dbReference type="EC" id="6.1.1.16" evidence="1"/>
<dbReference type="EMBL" id="CP000805">
    <property type="protein sequence ID" value="ACD70518.1"/>
    <property type="molecule type" value="Genomic_DNA"/>
</dbReference>
<dbReference type="RefSeq" id="WP_010881540.1">
    <property type="nucleotide sequence ID" value="NC_021508.1"/>
</dbReference>
<dbReference type="SMR" id="B2S239"/>
<dbReference type="KEGG" id="tpp:TPASS_0091"/>
<dbReference type="PATRIC" id="fig|455434.6.peg.92"/>
<dbReference type="Proteomes" id="UP000001202">
    <property type="component" value="Chromosome"/>
</dbReference>
<dbReference type="GO" id="GO:0005829">
    <property type="term" value="C:cytosol"/>
    <property type="evidence" value="ECO:0007669"/>
    <property type="project" value="TreeGrafter"/>
</dbReference>
<dbReference type="GO" id="GO:0005524">
    <property type="term" value="F:ATP binding"/>
    <property type="evidence" value="ECO:0007669"/>
    <property type="project" value="UniProtKB-UniRule"/>
</dbReference>
<dbReference type="GO" id="GO:0004817">
    <property type="term" value="F:cysteine-tRNA ligase activity"/>
    <property type="evidence" value="ECO:0007669"/>
    <property type="project" value="UniProtKB-UniRule"/>
</dbReference>
<dbReference type="GO" id="GO:0008270">
    <property type="term" value="F:zinc ion binding"/>
    <property type="evidence" value="ECO:0007669"/>
    <property type="project" value="UniProtKB-UniRule"/>
</dbReference>
<dbReference type="GO" id="GO:0006423">
    <property type="term" value="P:cysteinyl-tRNA aminoacylation"/>
    <property type="evidence" value="ECO:0007669"/>
    <property type="project" value="UniProtKB-UniRule"/>
</dbReference>
<dbReference type="CDD" id="cd00672">
    <property type="entry name" value="CysRS_core"/>
    <property type="match status" value="1"/>
</dbReference>
<dbReference type="Gene3D" id="1.20.120.1910">
    <property type="entry name" value="Cysteine-tRNA ligase, C-terminal anti-codon recognition domain"/>
    <property type="match status" value="1"/>
</dbReference>
<dbReference type="Gene3D" id="3.40.50.620">
    <property type="entry name" value="HUPs"/>
    <property type="match status" value="1"/>
</dbReference>
<dbReference type="HAMAP" id="MF_00041">
    <property type="entry name" value="Cys_tRNA_synth"/>
    <property type="match status" value="1"/>
</dbReference>
<dbReference type="InterPro" id="IPR015803">
    <property type="entry name" value="Cys-tRNA-ligase"/>
</dbReference>
<dbReference type="InterPro" id="IPR015273">
    <property type="entry name" value="Cys-tRNA-synt_Ia_DALR"/>
</dbReference>
<dbReference type="InterPro" id="IPR024909">
    <property type="entry name" value="Cys-tRNA/MSH_ligase"/>
</dbReference>
<dbReference type="InterPro" id="IPR014729">
    <property type="entry name" value="Rossmann-like_a/b/a_fold"/>
</dbReference>
<dbReference type="InterPro" id="IPR032678">
    <property type="entry name" value="tRNA-synt_1_cat_dom"/>
</dbReference>
<dbReference type="InterPro" id="IPR009080">
    <property type="entry name" value="tRNAsynth_Ia_anticodon-bd"/>
</dbReference>
<dbReference type="NCBIfam" id="TIGR00435">
    <property type="entry name" value="cysS"/>
    <property type="match status" value="1"/>
</dbReference>
<dbReference type="NCBIfam" id="NF011108">
    <property type="entry name" value="PRK14536.1"/>
    <property type="match status" value="1"/>
</dbReference>
<dbReference type="PANTHER" id="PTHR10890:SF3">
    <property type="entry name" value="CYSTEINE--TRNA LIGASE, CYTOPLASMIC"/>
    <property type="match status" value="1"/>
</dbReference>
<dbReference type="PANTHER" id="PTHR10890">
    <property type="entry name" value="CYSTEINYL-TRNA SYNTHETASE"/>
    <property type="match status" value="1"/>
</dbReference>
<dbReference type="Pfam" id="PF01406">
    <property type="entry name" value="tRNA-synt_1e"/>
    <property type="match status" value="1"/>
</dbReference>
<dbReference type="PRINTS" id="PR00983">
    <property type="entry name" value="TRNASYNTHCYS"/>
</dbReference>
<dbReference type="SMART" id="SM00840">
    <property type="entry name" value="DALR_2"/>
    <property type="match status" value="1"/>
</dbReference>
<dbReference type="SUPFAM" id="SSF47323">
    <property type="entry name" value="Anticodon-binding domain of a subclass of class I aminoacyl-tRNA synthetases"/>
    <property type="match status" value="1"/>
</dbReference>
<dbReference type="SUPFAM" id="SSF52374">
    <property type="entry name" value="Nucleotidylyl transferase"/>
    <property type="match status" value="1"/>
</dbReference>
<name>SYC_TREPS</name>
<proteinExistence type="inferred from homology"/>
<feature type="chain" id="PRO_1000199089" description="Cysteine--tRNA ligase">
    <location>
        <begin position="1"/>
        <end position="520"/>
    </location>
</feature>
<feature type="short sequence motif" description="'HIGH' region">
    <location>
        <begin position="31"/>
        <end position="41"/>
    </location>
</feature>
<feature type="short sequence motif" description="'KMSKS' region">
    <location>
        <begin position="301"/>
        <end position="305"/>
    </location>
</feature>
<feature type="binding site" evidence="1">
    <location>
        <position position="29"/>
    </location>
    <ligand>
        <name>Zn(2+)</name>
        <dbReference type="ChEBI" id="CHEBI:29105"/>
    </ligand>
</feature>
<feature type="binding site" evidence="1">
    <location>
        <position position="227"/>
    </location>
    <ligand>
        <name>Zn(2+)</name>
        <dbReference type="ChEBI" id="CHEBI:29105"/>
    </ligand>
</feature>
<feature type="binding site" evidence="1">
    <location>
        <position position="252"/>
    </location>
    <ligand>
        <name>Zn(2+)</name>
        <dbReference type="ChEBI" id="CHEBI:29105"/>
    </ligand>
</feature>
<feature type="binding site" evidence="1">
    <location>
        <position position="256"/>
    </location>
    <ligand>
        <name>Zn(2+)</name>
        <dbReference type="ChEBI" id="CHEBI:29105"/>
    </ligand>
</feature>
<feature type="binding site" evidence="1">
    <location>
        <position position="304"/>
    </location>
    <ligand>
        <name>ATP</name>
        <dbReference type="ChEBI" id="CHEBI:30616"/>
    </ligand>
</feature>
<gene>
    <name evidence="1" type="primary">cysS</name>
    <name type="ordered locus">TPASS_0091</name>
</gene>
<comment type="catalytic activity">
    <reaction evidence="1">
        <text>tRNA(Cys) + L-cysteine + ATP = L-cysteinyl-tRNA(Cys) + AMP + diphosphate</text>
        <dbReference type="Rhea" id="RHEA:17773"/>
        <dbReference type="Rhea" id="RHEA-COMP:9661"/>
        <dbReference type="Rhea" id="RHEA-COMP:9679"/>
        <dbReference type="ChEBI" id="CHEBI:30616"/>
        <dbReference type="ChEBI" id="CHEBI:33019"/>
        <dbReference type="ChEBI" id="CHEBI:35235"/>
        <dbReference type="ChEBI" id="CHEBI:78442"/>
        <dbReference type="ChEBI" id="CHEBI:78517"/>
        <dbReference type="ChEBI" id="CHEBI:456215"/>
        <dbReference type="EC" id="6.1.1.16"/>
    </reaction>
</comment>
<comment type="cofactor">
    <cofactor evidence="1">
        <name>Zn(2+)</name>
        <dbReference type="ChEBI" id="CHEBI:29105"/>
    </cofactor>
    <text evidence="1">Binds 1 zinc ion per subunit.</text>
</comment>
<comment type="subunit">
    <text evidence="1">Monomer.</text>
</comment>
<comment type="subcellular location">
    <subcellularLocation>
        <location evidence="1">Cytoplasm</location>
    </subcellularLocation>
</comment>
<comment type="similarity">
    <text evidence="1">Belongs to the class-I aminoacyl-tRNA synthetase family.</text>
</comment>
<accession>B2S239</accession>
<sequence length="520" mass="58403">MALRVYNTLTRQQEHFQPWEHGHVRLYGCGPTVYNYPHLGNLRAYVFQDTVRRTLHFLGYRVTYVMNITDVGHLESDADSGEDKLVRSAQAHGHSVLQVAAHYRAAFFRDTALLGIEEPSIVCNASDCIQDMIAFIEQLLARGHAYCAGGNVYFDVRSFPSYESFGSAAVEDVQEGEDAARARVAHDTHKRDARDFVLWFTRSKFVRHALTWDSPWGRGYPGWHIGCSAMSMKFLGPRCDIHIGGVDHIRVHHRNERAQCEAITGAPWVRYWLHHEFLLMQLQKRAVHADMGSSVVSSFSKMSKSCGQFLTLSSLQERGFQPADFRFFLLSGQYRTQLAFSWDALKTARAARRSFVRRVARVVDAARATTGSVRGTSAECAAERVCESRASESELLLTDFRAALEDDFSTPRALSALQKLVRDTSVPPSLCVSALQVADTVLGLGIIQEATASLSAQVPAGDTLPQRPLPSEEWIGQLVRARAHARQTRDFPRADEIRRQLKAEGIELEDTHLGTIWKRV</sequence>
<keyword id="KW-0030">Aminoacyl-tRNA synthetase</keyword>
<keyword id="KW-0067">ATP-binding</keyword>
<keyword id="KW-0963">Cytoplasm</keyword>
<keyword id="KW-0436">Ligase</keyword>
<keyword id="KW-0479">Metal-binding</keyword>
<keyword id="KW-0547">Nucleotide-binding</keyword>
<keyword id="KW-0648">Protein biosynthesis</keyword>
<keyword id="KW-0862">Zinc</keyword>